<proteinExistence type="inferred from homology"/>
<dbReference type="EMBL" id="AP003843">
    <property type="protein sequence ID" value="BAC24865.1"/>
    <property type="molecule type" value="Genomic_DNA"/>
</dbReference>
<dbReference type="EMBL" id="AP008213">
    <property type="protein sequence ID" value="BAH93802.1"/>
    <property type="status" value="ALT_SEQ"/>
    <property type="molecule type" value="Genomic_DNA"/>
</dbReference>
<dbReference type="EMBL" id="AP014963">
    <property type="status" value="NOT_ANNOTATED_CDS"/>
    <property type="molecule type" value="Genomic_DNA"/>
</dbReference>
<dbReference type="SMR" id="Q8H569"/>
<dbReference type="FunCoup" id="Q8H569">
    <property type="interactions" value="940"/>
</dbReference>
<dbReference type="STRING" id="39947.Q8H569"/>
<dbReference type="PaxDb" id="39947-Q8H569"/>
<dbReference type="KEGG" id="dosa:Os07g0175400"/>
<dbReference type="eggNOG" id="KOG0498">
    <property type="taxonomic scope" value="Eukaryota"/>
</dbReference>
<dbReference type="InParanoid" id="Q8H569"/>
<dbReference type="Proteomes" id="UP000000763">
    <property type="component" value="Chromosome 7"/>
</dbReference>
<dbReference type="Proteomes" id="UP000059680">
    <property type="component" value="Chromosome 7"/>
</dbReference>
<dbReference type="GO" id="GO:0034702">
    <property type="term" value="C:monoatomic ion channel complex"/>
    <property type="evidence" value="ECO:0007669"/>
    <property type="project" value="UniProtKB-KW"/>
</dbReference>
<dbReference type="GO" id="GO:0005249">
    <property type="term" value="F:voltage-gated potassium channel activity"/>
    <property type="evidence" value="ECO:0007669"/>
    <property type="project" value="InterPro"/>
</dbReference>
<dbReference type="CDD" id="cd00038">
    <property type="entry name" value="CAP_ED"/>
    <property type="match status" value="1"/>
</dbReference>
<dbReference type="FunFam" id="2.60.120.10:FF:000074">
    <property type="entry name" value="Potassium channel KAT2"/>
    <property type="match status" value="1"/>
</dbReference>
<dbReference type="FunFam" id="1.10.287.70:FF:000123">
    <property type="entry name" value="Potassium channel KAT3"/>
    <property type="match status" value="1"/>
</dbReference>
<dbReference type="Gene3D" id="1.10.287.70">
    <property type="match status" value="1"/>
</dbReference>
<dbReference type="Gene3D" id="1.25.40.20">
    <property type="entry name" value="Ankyrin repeat-containing domain"/>
    <property type="match status" value="1"/>
</dbReference>
<dbReference type="Gene3D" id="2.60.120.10">
    <property type="entry name" value="Jelly Rolls"/>
    <property type="match status" value="1"/>
</dbReference>
<dbReference type="InterPro" id="IPR002110">
    <property type="entry name" value="Ankyrin_rpt"/>
</dbReference>
<dbReference type="InterPro" id="IPR036770">
    <property type="entry name" value="Ankyrin_rpt-contain_sf"/>
</dbReference>
<dbReference type="InterPro" id="IPR000595">
    <property type="entry name" value="cNMP-bd_dom"/>
</dbReference>
<dbReference type="InterPro" id="IPR018490">
    <property type="entry name" value="cNMP-bd_dom_sf"/>
</dbReference>
<dbReference type="InterPro" id="IPR005821">
    <property type="entry name" value="Ion_trans_dom"/>
</dbReference>
<dbReference type="InterPro" id="IPR003938">
    <property type="entry name" value="K_chnl_volt-dep_EAG/ELK/ERG"/>
</dbReference>
<dbReference type="InterPro" id="IPR045319">
    <property type="entry name" value="KAT/AKT"/>
</dbReference>
<dbReference type="InterPro" id="IPR021789">
    <property type="entry name" value="KHA_dom"/>
</dbReference>
<dbReference type="InterPro" id="IPR014710">
    <property type="entry name" value="RmlC-like_jellyroll"/>
</dbReference>
<dbReference type="PANTHER" id="PTHR45743">
    <property type="entry name" value="POTASSIUM CHANNEL AKT1"/>
    <property type="match status" value="1"/>
</dbReference>
<dbReference type="PANTHER" id="PTHR45743:SF10">
    <property type="entry name" value="POTASSIUM CHANNEL AKT3"/>
    <property type="match status" value="1"/>
</dbReference>
<dbReference type="Pfam" id="PF12796">
    <property type="entry name" value="Ank_2"/>
    <property type="match status" value="2"/>
</dbReference>
<dbReference type="Pfam" id="PF00027">
    <property type="entry name" value="cNMP_binding"/>
    <property type="match status" value="1"/>
</dbReference>
<dbReference type="Pfam" id="PF00520">
    <property type="entry name" value="Ion_trans"/>
    <property type="match status" value="1"/>
</dbReference>
<dbReference type="Pfam" id="PF11834">
    <property type="entry name" value="KHA"/>
    <property type="match status" value="1"/>
</dbReference>
<dbReference type="PRINTS" id="PR01415">
    <property type="entry name" value="ANKYRIN"/>
</dbReference>
<dbReference type="PRINTS" id="PR01463">
    <property type="entry name" value="EAGCHANLFMLY"/>
</dbReference>
<dbReference type="SMART" id="SM00248">
    <property type="entry name" value="ANK"/>
    <property type="match status" value="4"/>
</dbReference>
<dbReference type="SMART" id="SM00100">
    <property type="entry name" value="cNMP"/>
    <property type="match status" value="1"/>
</dbReference>
<dbReference type="SUPFAM" id="SSF48403">
    <property type="entry name" value="Ankyrin repeat"/>
    <property type="match status" value="1"/>
</dbReference>
<dbReference type="SUPFAM" id="SSF51206">
    <property type="entry name" value="cAMP-binding domain-like"/>
    <property type="match status" value="1"/>
</dbReference>
<dbReference type="SUPFAM" id="SSF81324">
    <property type="entry name" value="Voltage-gated potassium channels"/>
    <property type="match status" value="1"/>
</dbReference>
<dbReference type="PROSITE" id="PS50297">
    <property type="entry name" value="ANK_REP_REGION"/>
    <property type="match status" value="1"/>
</dbReference>
<dbReference type="PROSITE" id="PS50088">
    <property type="entry name" value="ANK_REPEAT"/>
    <property type="match status" value="3"/>
</dbReference>
<dbReference type="PROSITE" id="PS50042">
    <property type="entry name" value="CNMP_BINDING_3"/>
    <property type="match status" value="1"/>
</dbReference>
<dbReference type="PROSITE" id="PS51490">
    <property type="entry name" value="KHA"/>
    <property type="match status" value="1"/>
</dbReference>
<accession>Q8H569</accession>
<accession>C7J4T3</accession>
<gene>
    <name type="ordered locus">Os07g0175400</name>
    <name type="ordered locus">LOC_Os07g07910</name>
    <name type="ORF">OJ1656_E11.135</name>
</gene>
<reference key="1">
    <citation type="journal article" date="2005" name="Nature">
        <title>The map-based sequence of the rice genome.</title>
        <authorList>
            <consortium name="International rice genome sequencing project (IRGSP)"/>
        </authorList>
    </citation>
    <scope>NUCLEOTIDE SEQUENCE [LARGE SCALE GENOMIC DNA]</scope>
    <source>
        <strain>cv. Nipponbare</strain>
    </source>
</reference>
<reference key="2">
    <citation type="journal article" date="2008" name="Nucleic Acids Res.">
        <title>The rice annotation project database (RAP-DB): 2008 update.</title>
        <authorList>
            <consortium name="The rice annotation project (RAP)"/>
        </authorList>
    </citation>
    <scope>GENOME REANNOTATION</scope>
    <source>
        <strain>cv. Nipponbare</strain>
    </source>
</reference>
<reference key="3">
    <citation type="journal article" date="2013" name="Rice">
        <title>Improvement of the Oryza sativa Nipponbare reference genome using next generation sequence and optical map data.</title>
        <authorList>
            <person name="Kawahara Y."/>
            <person name="de la Bastide M."/>
            <person name="Hamilton J.P."/>
            <person name="Kanamori H."/>
            <person name="McCombie W.R."/>
            <person name="Ouyang S."/>
            <person name="Schwartz D.C."/>
            <person name="Tanaka T."/>
            <person name="Wu J."/>
            <person name="Zhou S."/>
            <person name="Childs K.L."/>
            <person name="Davidson R.M."/>
            <person name="Lin H."/>
            <person name="Quesada-Ocampo L."/>
            <person name="Vaillancourt B."/>
            <person name="Sakai H."/>
            <person name="Lee S.S."/>
            <person name="Kim J."/>
            <person name="Numa H."/>
            <person name="Itoh T."/>
            <person name="Buell C.R."/>
            <person name="Matsumoto T."/>
        </authorList>
    </citation>
    <scope>GENOME REANNOTATION</scope>
    <source>
        <strain>cv. Nipponbare</strain>
    </source>
</reference>
<sequence length="907" mass="99462">MPTTKCAVPLVSGAAGGGGSAELTRQLSSTQASPRFSFSSGVLPSLGSRGGGERHARLRRFIVSPYDRRYELWNNYLILLVVYSAWVTPFEFGFVPEPAGALAAADNAVNAFFAVDIVLTFFVAYTDPKTFLLQDDPRKIALRYITTWFVLDVVATIPTELARRILPPDLRSYGFFGILRLWRLHRVGILFARLEKDRKFSYFWVRCVKLVCVTLFAVHCSACFYYLLADRYPDPTNTWISAYMPNFHKASIWSRYVASMYWSITTLSTVGYGDMHAENTGEMVFTTTYMLFNLGLTAYIIGNMTNLVVHGTSRTRKFRDMIQAATSFAQRHQLPARLQEQMVSHLSLKFRTNSEGLHQQETFEALPKAIKSSISHHLFFGLVQNVYLFEGVSNDLIFQLVSEMNAEYFAPREDIILQNEAPADFYIIVSGSMELIELHNGIEQASVLTLAGMAKSGDVVGEIGVLCYRPQLFTARTRSLCQLLRLDRAAFLRIIQSNIADGTIVMNNLIQYLREKKEIASIVAVAKEIDDMLARGQMDFPITLCFAASKGDSFLLHQLLKRGLDPNESDHYGRTALHIAASNGNEQCVRLLLENGADSNSRDPEGRVPLWEALCRRHQTVVQLLVDAGADLSGGDAAPYARVAVEQNDAALLGEIVRHGGDVSGACSGDGTTALHRAVLDGNVQMARLLLEHGADADAEDVNGLTPRAVAEQGGHADMQLAFASATRHEPRKARPPPPASAIVPVPLRDGVDSSPSSSSRRGRTSSTSAASARSTPQRMANFRNSLFGVISSSHAFHHEGGYRGGGGGGGAAAERERSSSSPPLVRVAISCPESRGGKDHSSKLVFMPETLRGLLELGAARFGVSPTRVVTSGGADVDDARLVRDGDHLLLVTDKWVPPENRSRNQ</sequence>
<comment type="function">
    <text evidence="1">Probable inward-rectifying potassium channel. Assuming opened or closed conformations in response to the voltage difference across the membrane, the channel is activated by hyperpolarization (By similarity).</text>
</comment>
<comment type="subcellular location">
    <subcellularLocation>
        <location evidence="5">Membrane</location>
        <topology evidence="5">Multi-pass membrane protein</topology>
    </subcellularLocation>
</comment>
<comment type="domain">
    <text evidence="1">The segment S4 is probably the voltage-sensor and is characterized by a series of positively charged amino acids. The pore-forming region H5 is enclosed by the transmembrane segments S5 and S6 in the Shaker-type (1P/6TM) and contains the GYGD signature motif which seems to be involved in potassium selectivity (By similarity).</text>
</comment>
<comment type="domain">
    <text evidence="1">The KHA domain (rich in hydrophobic and acidic residues) present in the C-terminal part is likely to be important for tetramerization.</text>
</comment>
<comment type="similarity">
    <text evidence="5">Belongs to the potassium channel family. Plant (TC 1.A.1.4) subfamily.</text>
</comment>
<comment type="sequence caution" evidence="5">
    <conflict type="erroneous gene model prediction">
        <sequence resource="EMBL-CDS" id="BAH93802"/>
    </conflict>
</comment>
<protein>
    <recommendedName>
        <fullName>Potassium channel AKT3</fullName>
    </recommendedName>
</protein>
<keyword id="KW-0040">ANK repeat</keyword>
<keyword id="KW-0407">Ion channel</keyword>
<keyword id="KW-0406">Ion transport</keyword>
<keyword id="KW-0472">Membrane</keyword>
<keyword id="KW-0630">Potassium</keyword>
<keyword id="KW-0631">Potassium channel</keyword>
<keyword id="KW-0633">Potassium transport</keyword>
<keyword id="KW-1185">Reference proteome</keyword>
<keyword id="KW-0677">Repeat</keyword>
<keyword id="KW-0812">Transmembrane</keyword>
<keyword id="KW-1133">Transmembrane helix</keyword>
<keyword id="KW-0813">Transport</keyword>
<keyword id="KW-0851">Voltage-gated channel</keyword>
<organism>
    <name type="scientific">Oryza sativa subsp. japonica</name>
    <name type="common">Rice</name>
    <dbReference type="NCBI Taxonomy" id="39947"/>
    <lineage>
        <taxon>Eukaryota</taxon>
        <taxon>Viridiplantae</taxon>
        <taxon>Streptophyta</taxon>
        <taxon>Embryophyta</taxon>
        <taxon>Tracheophyta</taxon>
        <taxon>Spermatophyta</taxon>
        <taxon>Magnoliopsida</taxon>
        <taxon>Liliopsida</taxon>
        <taxon>Poales</taxon>
        <taxon>Poaceae</taxon>
        <taxon>BOP clade</taxon>
        <taxon>Oryzoideae</taxon>
        <taxon>Oryzeae</taxon>
        <taxon>Oryzinae</taxon>
        <taxon>Oryza</taxon>
        <taxon>Oryza sativa</taxon>
    </lineage>
</organism>
<feature type="chain" id="PRO_0000410876" description="Potassium channel AKT3">
    <location>
        <begin position="1"/>
        <end position="907"/>
    </location>
</feature>
<feature type="topological domain" description="Cytoplasmic" evidence="2">
    <location>
        <begin position="1"/>
        <end position="75"/>
    </location>
</feature>
<feature type="transmembrane region" description="Helical; Name=Segment S1" evidence="2">
    <location>
        <begin position="76"/>
        <end position="96"/>
    </location>
</feature>
<feature type="topological domain" description="Extracellular" evidence="2">
    <location>
        <begin position="97"/>
        <end position="102"/>
    </location>
</feature>
<feature type="transmembrane region" description="Helical; Name=Segment S2" evidence="2">
    <location>
        <begin position="103"/>
        <end position="123"/>
    </location>
</feature>
<feature type="topological domain" description="Cytoplasmic" evidence="2">
    <location>
        <begin position="124"/>
        <end position="146"/>
    </location>
</feature>
<feature type="transmembrane region" description="Helical; Name=Segment S3" evidence="2">
    <location>
        <begin position="147"/>
        <end position="167"/>
    </location>
</feature>
<feature type="topological domain" description="Extracellular" evidence="2">
    <location>
        <begin position="168"/>
        <end position="174"/>
    </location>
</feature>
<feature type="transmembrane region" description="Helical; Voltage-sensor; Name=Segment S4" evidence="2">
    <location>
        <begin position="175"/>
        <end position="195"/>
    </location>
</feature>
<feature type="topological domain" description="Cytoplasmic" evidence="2">
    <location>
        <begin position="196"/>
        <end position="209"/>
    </location>
</feature>
<feature type="transmembrane region" description="Helical; Name=Segment S5" evidence="2">
    <location>
        <begin position="210"/>
        <end position="230"/>
    </location>
</feature>
<feature type="topological domain" description="Extracellular" evidence="2">
    <location>
        <begin position="231"/>
        <end position="257"/>
    </location>
</feature>
<feature type="intramembrane region" description="Pore-forming; Name=Segment H5" evidence="2">
    <location>
        <begin position="258"/>
        <end position="277"/>
    </location>
</feature>
<feature type="topological domain" description="Extracellular" evidence="2">
    <location>
        <begin position="278"/>
        <end position="288"/>
    </location>
</feature>
<feature type="transmembrane region" description="Helical; Name=Segment S6" evidence="2">
    <location>
        <begin position="289"/>
        <end position="309"/>
    </location>
</feature>
<feature type="topological domain" description="Cytoplasmic" evidence="2">
    <location>
        <begin position="310"/>
        <end position="907"/>
    </location>
</feature>
<feature type="repeat" description="ANK 1">
    <location>
        <begin position="539"/>
        <end position="568"/>
    </location>
</feature>
<feature type="repeat" description="ANK 2">
    <location>
        <begin position="572"/>
        <end position="601"/>
    </location>
</feature>
<feature type="repeat" description="ANK 3">
    <location>
        <begin position="605"/>
        <end position="634"/>
    </location>
</feature>
<feature type="repeat" description="ANK 4">
    <location>
        <begin position="636"/>
        <end position="665"/>
    </location>
</feature>
<feature type="repeat" description="ANK 5">
    <location>
        <begin position="670"/>
        <end position="699"/>
    </location>
</feature>
<feature type="domain" description="KHA" evidence="3">
    <location>
        <begin position="827"/>
        <end position="907"/>
    </location>
</feature>
<feature type="region of interest" description="Disordered" evidence="4">
    <location>
        <begin position="726"/>
        <end position="779"/>
    </location>
</feature>
<feature type="region of interest" description="Disordered" evidence="4">
    <location>
        <begin position="801"/>
        <end position="824"/>
    </location>
</feature>
<feature type="compositionally biased region" description="Low complexity" evidence="4">
    <location>
        <begin position="754"/>
        <end position="776"/>
    </location>
</feature>
<feature type="compositionally biased region" description="Gly residues" evidence="4">
    <location>
        <begin position="803"/>
        <end position="812"/>
    </location>
</feature>
<feature type="binding site">
    <location>
        <begin position="388"/>
        <end position="512"/>
    </location>
    <ligand>
        <name>a nucleoside 3',5'-cyclic phosphate</name>
        <dbReference type="ChEBI" id="CHEBI:58464"/>
    </ligand>
</feature>
<name>AKT3_ORYSJ</name>
<evidence type="ECO:0000250" key="1"/>
<evidence type="ECO:0000255" key="2"/>
<evidence type="ECO:0000255" key="3">
    <source>
        <dbReference type="PROSITE-ProRule" id="PRU00823"/>
    </source>
</evidence>
<evidence type="ECO:0000256" key="4">
    <source>
        <dbReference type="SAM" id="MobiDB-lite"/>
    </source>
</evidence>
<evidence type="ECO:0000305" key="5"/>